<organism>
    <name type="scientific">Lactiplantibacillus plantarum (strain ATCC BAA-793 / NCIMB 8826 / WCFS1)</name>
    <name type="common">Lactobacillus plantarum</name>
    <dbReference type="NCBI Taxonomy" id="220668"/>
    <lineage>
        <taxon>Bacteria</taxon>
        <taxon>Bacillati</taxon>
        <taxon>Bacillota</taxon>
        <taxon>Bacilli</taxon>
        <taxon>Lactobacillales</taxon>
        <taxon>Lactobacillaceae</taxon>
        <taxon>Lactiplantibacillus</taxon>
    </lineage>
</organism>
<gene>
    <name evidence="1" type="primary">hisC</name>
    <name type="ordered locus">lp_2551</name>
</gene>
<comment type="catalytic activity">
    <reaction evidence="1">
        <text>L-histidinol phosphate + 2-oxoglutarate = 3-(imidazol-4-yl)-2-oxopropyl phosphate + L-glutamate</text>
        <dbReference type="Rhea" id="RHEA:23744"/>
        <dbReference type="ChEBI" id="CHEBI:16810"/>
        <dbReference type="ChEBI" id="CHEBI:29985"/>
        <dbReference type="ChEBI" id="CHEBI:57766"/>
        <dbReference type="ChEBI" id="CHEBI:57980"/>
        <dbReference type="EC" id="2.6.1.9"/>
    </reaction>
</comment>
<comment type="cofactor">
    <cofactor evidence="1">
        <name>pyridoxal 5'-phosphate</name>
        <dbReference type="ChEBI" id="CHEBI:597326"/>
    </cofactor>
</comment>
<comment type="pathway">
    <text evidence="1">Amino-acid biosynthesis; L-histidine biosynthesis; L-histidine from 5-phospho-alpha-D-ribose 1-diphosphate: step 7/9.</text>
</comment>
<comment type="subunit">
    <text evidence="1">Homodimer.</text>
</comment>
<comment type="similarity">
    <text evidence="1">Belongs to the class-II pyridoxal-phosphate-dependent aminotransferase family. Histidinol-phosphate aminotransferase subfamily.</text>
</comment>
<feature type="chain" id="PRO_0000153375" description="Histidinol-phosphate aminotransferase">
    <location>
        <begin position="1"/>
        <end position="356"/>
    </location>
</feature>
<feature type="modified residue" description="N6-(pyridoxal phosphate)lysine" evidence="1">
    <location>
        <position position="222"/>
    </location>
</feature>
<protein>
    <recommendedName>
        <fullName evidence="1">Histidinol-phosphate aminotransferase</fullName>
        <ecNumber evidence="1">2.6.1.9</ecNumber>
    </recommendedName>
    <alternativeName>
        <fullName evidence="1">Imidazole acetol-phosphate transaminase</fullName>
    </alternativeName>
</protein>
<sequence length="356" mass="39431">MKASIEQLEPYVPEKPLATLQAELGLTELVRLSANENPYGTSPKVATAVKNWDFTQSNRYPDADAQELRQAVAQQQGIDPNSIVFSVGLDEMIVMLSRTFLATNDQVLVSAPTFSEYGLHAEIEGGQLISVPTLPNDHVNFEGLMKAITPHVKMVWLCNPNNPTGTVESLAAIEAFVQQVPPETMVLIDEAYIDFTPGAAQVTAMQLPAKYPNVVVMRTFSKAYGLANFRIGYAVFNTKYAATMQTIRLPYNVNSLAQVAALAAIDDPNFVKQTVQKNATERAKWMAFFDDQGVTYDQSGANFIFFKYPSATQLADYLVHHGYLIRTGLRPGWLRLTVGTANDNQQLQQLIREFKA</sequence>
<keyword id="KW-0028">Amino-acid biosynthesis</keyword>
<keyword id="KW-0032">Aminotransferase</keyword>
<keyword id="KW-0368">Histidine biosynthesis</keyword>
<keyword id="KW-0663">Pyridoxal phosphate</keyword>
<keyword id="KW-1185">Reference proteome</keyword>
<keyword id="KW-0808">Transferase</keyword>
<accession>Q88UE6</accession>
<accession>F9UR68</accession>
<evidence type="ECO:0000255" key="1">
    <source>
        <dbReference type="HAMAP-Rule" id="MF_01023"/>
    </source>
</evidence>
<proteinExistence type="inferred from homology"/>
<name>HIS8_LACPL</name>
<dbReference type="EC" id="2.6.1.9" evidence="1"/>
<dbReference type="EMBL" id="AL935263">
    <property type="protein sequence ID" value="CCC79707.1"/>
    <property type="molecule type" value="Genomic_DNA"/>
</dbReference>
<dbReference type="RefSeq" id="WP_011101825.1">
    <property type="nucleotide sequence ID" value="NC_004567.2"/>
</dbReference>
<dbReference type="RefSeq" id="YP_004890221.1">
    <property type="nucleotide sequence ID" value="NC_004567.2"/>
</dbReference>
<dbReference type="SMR" id="Q88UE6"/>
<dbReference type="STRING" id="220668.lp_2551"/>
<dbReference type="DNASU" id="1062746"/>
<dbReference type="EnsemblBacteria" id="CCC79707">
    <property type="protein sequence ID" value="CCC79707"/>
    <property type="gene ID" value="lp_2551"/>
</dbReference>
<dbReference type="KEGG" id="lpl:lp_2551"/>
<dbReference type="PATRIC" id="fig|220668.9.peg.2143"/>
<dbReference type="eggNOG" id="COG0079">
    <property type="taxonomic scope" value="Bacteria"/>
</dbReference>
<dbReference type="HOGENOM" id="CLU_017584_3_3_9"/>
<dbReference type="OrthoDB" id="9813612at2"/>
<dbReference type="PhylomeDB" id="Q88UE6"/>
<dbReference type="UniPathway" id="UPA00031">
    <property type="reaction ID" value="UER00012"/>
</dbReference>
<dbReference type="Proteomes" id="UP000000432">
    <property type="component" value="Chromosome"/>
</dbReference>
<dbReference type="GO" id="GO:0004400">
    <property type="term" value="F:histidinol-phosphate transaminase activity"/>
    <property type="evidence" value="ECO:0007669"/>
    <property type="project" value="UniProtKB-UniRule"/>
</dbReference>
<dbReference type="GO" id="GO:0030170">
    <property type="term" value="F:pyridoxal phosphate binding"/>
    <property type="evidence" value="ECO:0007669"/>
    <property type="project" value="InterPro"/>
</dbReference>
<dbReference type="GO" id="GO:0000105">
    <property type="term" value="P:L-histidine biosynthetic process"/>
    <property type="evidence" value="ECO:0007669"/>
    <property type="project" value="UniProtKB-UniRule"/>
</dbReference>
<dbReference type="CDD" id="cd00609">
    <property type="entry name" value="AAT_like"/>
    <property type="match status" value="1"/>
</dbReference>
<dbReference type="Gene3D" id="3.90.1150.10">
    <property type="entry name" value="Aspartate Aminotransferase, domain 1"/>
    <property type="match status" value="1"/>
</dbReference>
<dbReference type="Gene3D" id="3.40.640.10">
    <property type="entry name" value="Type I PLP-dependent aspartate aminotransferase-like (Major domain)"/>
    <property type="match status" value="1"/>
</dbReference>
<dbReference type="HAMAP" id="MF_01023">
    <property type="entry name" value="HisC_aminotrans_2"/>
    <property type="match status" value="1"/>
</dbReference>
<dbReference type="InterPro" id="IPR004839">
    <property type="entry name" value="Aminotransferase_I/II_large"/>
</dbReference>
<dbReference type="InterPro" id="IPR005861">
    <property type="entry name" value="HisP_aminotrans"/>
</dbReference>
<dbReference type="InterPro" id="IPR050106">
    <property type="entry name" value="HistidinolP_aminotransfase"/>
</dbReference>
<dbReference type="InterPro" id="IPR015424">
    <property type="entry name" value="PyrdxlP-dep_Trfase"/>
</dbReference>
<dbReference type="InterPro" id="IPR015421">
    <property type="entry name" value="PyrdxlP-dep_Trfase_major"/>
</dbReference>
<dbReference type="InterPro" id="IPR015422">
    <property type="entry name" value="PyrdxlP-dep_Trfase_small"/>
</dbReference>
<dbReference type="NCBIfam" id="TIGR01141">
    <property type="entry name" value="hisC"/>
    <property type="match status" value="1"/>
</dbReference>
<dbReference type="PANTHER" id="PTHR43643:SF6">
    <property type="entry name" value="HISTIDINOL-PHOSPHATE AMINOTRANSFERASE"/>
    <property type="match status" value="1"/>
</dbReference>
<dbReference type="PANTHER" id="PTHR43643">
    <property type="entry name" value="HISTIDINOL-PHOSPHATE AMINOTRANSFERASE 2"/>
    <property type="match status" value="1"/>
</dbReference>
<dbReference type="Pfam" id="PF00155">
    <property type="entry name" value="Aminotran_1_2"/>
    <property type="match status" value="1"/>
</dbReference>
<dbReference type="SUPFAM" id="SSF53383">
    <property type="entry name" value="PLP-dependent transferases"/>
    <property type="match status" value="1"/>
</dbReference>
<reference key="1">
    <citation type="journal article" date="2003" name="Proc. Natl. Acad. Sci. U.S.A.">
        <title>Complete genome sequence of Lactobacillus plantarum WCFS1.</title>
        <authorList>
            <person name="Kleerebezem M."/>
            <person name="Boekhorst J."/>
            <person name="van Kranenburg R."/>
            <person name="Molenaar D."/>
            <person name="Kuipers O.P."/>
            <person name="Leer R."/>
            <person name="Tarchini R."/>
            <person name="Peters S.A."/>
            <person name="Sandbrink H.M."/>
            <person name="Fiers M.W.E.J."/>
            <person name="Stiekema W."/>
            <person name="Klein Lankhorst R.M."/>
            <person name="Bron P.A."/>
            <person name="Hoffer S.M."/>
            <person name="Nierop Groot M.N."/>
            <person name="Kerkhoven R."/>
            <person name="De Vries M."/>
            <person name="Ursing B."/>
            <person name="De Vos W.M."/>
            <person name="Siezen R.J."/>
        </authorList>
    </citation>
    <scope>NUCLEOTIDE SEQUENCE [LARGE SCALE GENOMIC DNA]</scope>
    <source>
        <strain>ATCC BAA-793 / NCIMB 8826 / WCFS1</strain>
    </source>
</reference>
<reference key="2">
    <citation type="journal article" date="2012" name="J. Bacteriol.">
        <title>Complete resequencing and reannotation of the Lactobacillus plantarum WCFS1 genome.</title>
        <authorList>
            <person name="Siezen R.J."/>
            <person name="Francke C."/>
            <person name="Renckens B."/>
            <person name="Boekhorst J."/>
            <person name="Wels M."/>
            <person name="Kleerebezem M."/>
            <person name="van Hijum S.A."/>
        </authorList>
    </citation>
    <scope>NUCLEOTIDE SEQUENCE [LARGE SCALE GENOMIC DNA]</scope>
    <scope>GENOME REANNOTATION</scope>
    <source>
        <strain>ATCC BAA-793 / NCIMB 8826 / WCFS1</strain>
    </source>
</reference>